<evidence type="ECO:0000255" key="1">
    <source>
        <dbReference type="HAMAP-Rule" id="MF_00374"/>
    </source>
</evidence>
<evidence type="ECO:0000305" key="2"/>
<sequence>MKASELREKSVEELNTELLGLLREQFNLRMQHATGQLTQTNQLKLVRRNIARVKTIITSKAGA</sequence>
<feature type="chain" id="PRO_1000007598" description="Large ribosomal subunit protein uL29">
    <location>
        <begin position="1"/>
        <end position="63"/>
    </location>
</feature>
<name>RL29_SHEDO</name>
<accession>Q12SV1</accession>
<organism>
    <name type="scientific">Shewanella denitrificans (strain OS217 / ATCC BAA-1090 / DSM 15013)</name>
    <dbReference type="NCBI Taxonomy" id="318161"/>
    <lineage>
        <taxon>Bacteria</taxon>
        <taxon>Pseudomonadati</taxon>
        <taxon>Pseudomonadota</taxon>
        <taxon>Gammaproteobacteria</taxon>
        <taxon>Alteromonadales</taxon>
        <taxon>Shewanellaceae</taxon>
        <taxon>Shewanella</taxon>
    </lineage>
</organism>
<gene>
    <name evidence="1" type="primary">rpmC</name>
    <name type="ordered locus">Sden_0178</name>
</gene>
<protein>
    <recommendedName>
        <fullName evidence="1">Large ribosomal subunit protein uL29</fullName>
    </recommendedName>
    <alternativeName>
        <fullName evidence="2">50S ribosomal protein L29</fullName>
    </alternativeName>
</protein>
<comment type="similarity">
    <text evidence="1">Belongs to the universal ribosomal protein uL29 family.</text>
</comment>
<proteinExistence type="inferred from homology"/>
<dbReference type="EMBL" id="CP000302">
    <property type="protein sequence ID" value="ABE53475.1"/>
    <property type="molecule type" value="Genomic_DNA"/>
</dbReference>
<dbReference type="RefSeq" id="WP_011494642.1">
    <property type="nucleotide sequence ID" value="NC_007954.1"/>
</dbReference>
<dbReference type="SMR" id="Q12SV1"/>
<dbReference type="STRING" id="318161.Sden_0178"/>
<dbReference type="KEGG" id="sdn:Sden_0178"/>
<dbReference type="eggNOG" id="COG0255">
    <property type="taxonomic scope" value="Bacteria"/>
</dbReference>
<dbReference type="HOGENOM" id="CLU_158491_1_2_6"/>
<dbReference type="OrthoDB" id="9815192at2"/>
<dbReference type="Proteomes" id="UP000001982">
    <property type="component" value="Chromosome"/>
</dbReference>
<dbReference type="GO" id="GO:0022625">
    <property type="term" value="C:cytosolic large ribosomal subunit"/>
    <property type="evidence" value="ECO:0007669"/>
    <property type="project" value="TreeGrafter"/>
</dbReference>
<dbReference type="GO" id="GO:0003735">
    <property type="term" value="F:structural constituent of ribosome"/>
    <property type="evidence" value="ECO:0007669"/>
    <property type="project" value="InterPro"/>
</dbReference>
<dbReference type="GO" id="GO:0006412">
    <property type="term" value="P:translation"/>
    <property type="evidence" value="ECO:0007669"/>
    <property type="project" value="UniProtKB-UniRule"/>
</dbReference>
<dbReference type="CDD" id="cd00427">
    <property type="entry name" value="Ribosomal_L29_HIP"/>
    <property type="match status" value="1"/>
</dbReference>
<dbReference type="FunFam" id="1.10.287.310:FF:000001">
    <property type="entry name" value="50S ribosomal protein L29"/>
    <property type="match status" value="1"/>
</dbReference>
<dbReference type="Gene3D" id="1.10.287.310">
    <property type="match status" value="1"/>
</dbReference>
<dbReference type="HAMAP" id="MF_00374">
    <property type="entry name" value="Ribosomal_uL29"/>
    <property type="match status" value="1"/>
</dbReference>
<dbReference type="InterPro" id="IPR050063">
    <property type="entry name" value="Ribosomal_protein_uL29"/>
</dbReference>
<dbReference type="InterPro" id="IPR001854">
    <property type="entry name" value="Ribosomal_uL29"/>
</dbReference>
<dbReference type="InterPro" id="IPR018254">
    <property type="entry name" value="Ribosomal_uL29_CS"/>
</dbReference>
<dbReference type="InterPro" id="IPR036049">
    <property type="entry name" value="Ribosomal_uL29_sf"/>
</dbReference>
<dbReference type="NCBIfam" id="TIGR00012">
    <property type="entry name" value="L29"/>
    <property type="match status" value="1"/>
</dbReference>
<dbReference type="PANTHER" id="PTHR10916">
    <property type="entry name" value="60S RIBOSOMAL PROTEIN L35/50S RIBOSOMAL PROTEIN L29"/>
    <property type="match status" value="1"/>
</dbReference>
<dbReference type="PANTHER" id="PTHR10916:SF0">
    <property type="entry name" value="LARGE RIBOSOMAL SUBUNIT PROTEIN UL29C"/>
    <property type="match status" value="1"/>
</dbReference>
<dbReference type="Pfam" id="PF00831">
    <property type="entry name" value="Ribosomal_L29"/>
    <property type="match status" value="1"/>
</dbReference>
<dbReference type="SUPFAM" id="SSF46561">
    <property type="entry name" value="Ribosomal protein L29 (L29p)"/>
    <property type="match status" value="1"/>
</dbReference>
<dbReference type="PROSITE" id="PS00579">
    <property type="entry name" value="RIBOSOMAL_L29"/>
    <property type="match status" value="1"/>
</dbReference>
<reference key="1">
    <citation type="submission" date="2006-03" db="EMBL/GenBank/DDBJ databases">
        <title>Complete sequence of Shewanella denitrificans OS217.</title>
        <authorList>
            <consortium name="US DOE Joint Genome Institute"/>
            <person name="Copeland A."/>
            <person name="Lucas S."/>
            <person name="Lapidus A."/>
            <person name="Barry K."/>
            <person name="Detter J.C."/>
            <person name="Glavina del Rio T."/>
            <person name="Hammon N."/>
            <person name="Israni S."/>
            <person name="Dalin E."/>
            <person name="Tice H."/>
            <person name="Pitluck S."/>
            <person name="Brettin T."/>
            <person name="Bruce D."/>
            <person name="Han C."/>
            <person name="Tapia R."/>
            <person name="Gilna P."/>
            <person name="Kiss H."/>
            <person name="Schmutz J."/>
            <person name="Larimer F."/>
            <person name="Land M."/>
            <person name="Hauser L."/>
            <person name="Kyrpides N."/>
            <person name="Lykidis A."/>
            <person name="Richardson P."/>
        </authorList>
    </citation>
    <scope>NUCLEOTIDE SEQUENCE [LARGE SCALE GENOMIC DNA]</scope>
    <source>
        <strain>OS217 / ATCC BAA-1090 / DSM 15013</strain>
    </source>
</reference>
<keyword id="KW-1185">Reference proteome</keyword>
<keyword id="KW-0687">Ribonucleoprotein</keyword>
<keyword id="KW-0689">Ribosomal protein</keyword>